<sequence length="97" mass="9967">MAKTATPGACASDPGSGPLPENYEMALAELEALVARMEGGTLSLEDSLAAYRRGAALVAFCQQQLEKAEQQVRVLDGASLKPLSAGTAAADGEDDDL</sequence>
<evidence type="ECO:0000255" key="1">
    <source>
        <dbReference type="HAMAP-Rule" id="MF_00337"/>
    </source>
</evidence>
<evidence type="ECO:0000256" key="2">
    <source>
        <dbReference type="SAM" id="MobiDB-lite"/>
    </source>
</evidence>
<proteinExistence type="inferred from homology"/>
<keyword id="KW-0963">Cytoplasm</keyword>
<keyword id="KW-0269">Exonuclease</keyword>
<keyword id="KW-0378">Hydrolase</keyword>
<keyword id="KW-0540">Nuclease</keyword>
<organism>
    <name type="scientific">Burkholderia mallei (strain SAVP1)</name>
    <dbReference type="NCBI Taxonomy" id="320388"/>
    <lineage>
        <taxon>Bacteria</taxon>
        <taxon>Pseudomonadati</taxon>
        <taxon>Pseudomonadota</taxon>
        <taxon>Betaproteobacteria</taxon>
        <taxon>Burkholderiales</taxon>
        <taxon>Burkholderiaceae</taxon>
        <taxon>Burkholderia</taxon>
        <taxon>pseudomallei group</taxon>
    </lineage>
</organism>
<reference key="1">
    <citation type="journal article" date="2010" name="Genome Biol. Evol.">
        <title>Continuing evolution of Burkholderia mallei through genome reduction and large-scale rearrangements.</title>
        <authorList>
            <person name="Losada L."/>
            <person name="Ronning C.M."/>
            <person name="DeShazer D."/>
            <person name="Woods D."/>
            <person name="Fedorova N."/>
            <person name="Kim H.S."/>
            <person name="Shabalina S.A."/>
            <person name="Pearson T.R."/>
            <person name="Brinkac L."/>
            <person name="Tan P."/>
            <person name="Nandi T."/>
            <person name="Crabtree J."/>
            <person name="Badger J."/>
            <person name="Beckstrom-Sternberg S."/>
            <person name="Saqib M."/>
            <person name="Schutzer S.E."/>
            <person name="Keim P."/>
            <person name="Nierman W.C."/>
        </authorList>
    </citation>
    <scope>NUCLEOTIDE SEQUENCE [LARGE SCALE GENOMIC DNA]</scope>
    <source>
        <strain>SAVP1</strain>
    </source>
</reference>
<protein>
    <recommendedName>
        <fullName evidence="1">Exodeoxyribonuclease 7 small subunit</fullName>
        <ecNumber evidence="1">3.1.11.6</ecNumber>
    </recommendedName>
    <alternativeName>
        <fullName evidence="1">Exodeoxyribonuclease VII small subunit</fullName>
        <shortName evidence="1">Exonuclease VII small subunit</shortName>
    </alternativeName>
</protein>
<name>EX7S_BURMS</name>
<gene>
    <name evidence="1" type="primary">xseB</name>
    <name type="ordered locus">BMASAVP1_1510</name>
</gene>
<feature type="chain" id="PRO_1000019572" description="Exodeoxyribonuclease 7 small subunit">
    <location>
        <begin position="1"/>
        <end position="97"/>
    </location>
</feature>
<feature type="region of interest" description="Disordered" evidence="2">
    <location>
        <begin position="1"/>
        <end position="21"/>
    </location>
</feature>
<dbReference type="EC" id="3.1.11.6" evidence="1"/>
<dbReference type="EMBL" id="CP000525">
    <property type="protein sequence ID" value="ABM47921.1"/>
    <property type="molecule type" value="Genomic_DNA"/>
</dbReference>
<dbReference type="RefSeq" id="WP_004190549.1">
    <property type="nucleotide sequence ID" value="NC_008784.1"/>
</dbReference>
<dbReference type="SMR" id="A1UYQ2"/>
<dbReference type="KEGG" id="bmv:BMASAVP1_1510"/>
<dbReference type="HOGENOM" id="CLU_145918_2_0_4"/>
<dbReference type="GO" id="GO:0005829">
    <property type="term" value="C:cytosol"/>
    <property type="evidence" value="ECO:0007669"/>
    <property type="project" value="TreeGrafter"/>
</dbReference>
<dbReference type="GO" id="GO:0009318">
    <property type="term" value="C:exodeoxyribonuclease VII complex"/>
    <property type="evidence" value="ECO:0007669"/>
    <property type="project" value="InterPro"/>
</dbReference>
<dbReference type="GO" id="GO:0008855">
    <property type="term" value="F:exodeoxyribonuclease VII activity"/>
    <property type="evidence" value="ECO:0007669"/>
    <property type="project" value="UniProtKB-UniRule"/>
</dbReference>
<dbReference type="GO" id="GO:0006308">
    <property type="term" value="P:DNA catabolic process"/>
    <property type="evidence" value="ECO:0007669"/>
    <property type="project" value="UniProtKB-UniRule"/>
</dbReference>
<dbReference type="Gene3D" id="1.10.287.1040">
    <property type="entry name" value="Exonuclease VII, small subunit"/>
    <property type="match status" value="1"/>
</dbReference>
<dbReference type="HAMAP" id="MF_00337">
    <property type="entry name" value="Exonuc_7_S"/>
    <property type="match status" value="1"/>
</dbReference>
<dbReference type="InterPro" id="IPR003761">
    <property type="entry name" value="Exonuc_VII_S"/>
</dbReference>
<dbReference type="InterPro" id="IPR037004">
    <property type="entry name" value="Exonuc_VII_ssu_sf"/>
</dbReference>
<dbReference type="NCBIfam" id="NF002141">
    <property type="entry name" value="PRK00977.1-5"/>
    <property type="match status" value="1"/>
</dbReference>
<dbReference type="NCBIfam" id="TIGR01280">
    <property type="entry name" value="xseB"/>
    <property type="match status" value="1"/>
</dbReference>
<dbReference type="PANTHER" id="PTHR34137">
    <property type="entry name" value="EXODEOXYRIBONUCLEASE 7 SMALL SUBUNIT"/>
    <property type="match status" value="1"/>
</dbReference>
<dbReference type="PANTHER" id="PTHR34137:SF1">
    <property type="entry name" value="EXODEOXYRIBONUCLEASE 7 SMALL SUBUNIT"/>
    <property type="match status" value="1"/>
</dbReference>
<dbReference type="Pfam" id="PF02609">
    <property type="entry name" value="Exonuc_VII_S"/>
    <property type="match status" value="1"/>
</dbReference>
<dbReference type="SUPFAM" id="SSF116842">
    <property type="entry name" value="XseB-like"/>
    <property type="match status" value="1"/>
</dbReference>
<comment type="function">
    <text evidence="1">Bidirectionally degrades single-stranded DNA into large acid-insoluble oligonucleotides, which are then degraded further into small acid-soluble oligonucleotides.</text>
</comment>
<comment type="catalytic activity">
    <reaction evidence="1">
        <text>Exonucleolytic cleavage in either 5'- to 3'- or 3'- to 5'-direction to yield nucleoside 5'-phosphates.</text>
        <dbReference type="EC" id="3.1.11.6"/>
    </reaction>
</comment>
<comment type="subunit">
    <text evidence="1">Heterooligomer composed of large and small subunits.</text>
</comment>
<comment type="subcellular location">
    <subcellularLocation>
        <location evidence="1">Cytoplasm</location>
    </subcellularLocation>
</comment>
<comment type="similarity">
    <text evidence="1">Belongs to the XseB family.</text>
</comment>
<accession>A1UYQ2</accession>